<name>DAPB_DEHMC</name>
<accession>Q3ZXV5</accession>
<comment type="function">
    <text evidence="1">Catalyzes the conversion of 4-hydroxy-tetrahydrodipicolinate (HTPA) to tetrahydrodipicolinate.</text>
</comment>
<comment type="catalytic activity">
    <reaction evidence="1">
        <text>(S)-2,3,4,5-tetrahydrodipicolinate + NAD(+) + H2O = (2S,4S)-4-hydroxy-2,3,4,5-tetrahydrodipicolinate + NADH + H(+)</text>
        <dbReference type="Rhea" id="RHEA:35323"/>
        <dbReference type="ChEBI" id="CHEBI:15377"/>
        <dbReference type="ChEBI" id="CHEBI:15378"/>
        <dbReference type="ChEBI" id="CHEBI:16845"/>
        <dbReference type="ChEBI" id="CHEBI:57540"/>
        <dbReference type="ChEBI" id="CHEBI:57945"/>
        <dbReference type="ChEBI" id="CHEBI:67139"/>
        <dbReference type="EC" id="1.17.1.8"/>
    </reaction>
</comment>
<comment type="catalytic activity">
    <reaction evidence="1">
        <text>(S)-2,3,4,5-tetrahydrodipicolinate + NADP(+) + H2O = (2S,4S)-4-hydroxy-2,3,4,5-tetrahydrodipicolinate + NADPH + H(+)</text>
        <dbReference type="Rhea" id="RHEA:35331"/>
        <dbReference type="ChEBI" id="CHEBI:15377"/>
        <dbReference type="ChEBI" id="CHEBI:15378"/>
        <dbReference type="ChEBI" id="CHEBI:16845"/>
        <dbReference type="ChEBI" id="CHEBI:57783"/>
        <dbReference type="ChEBI" id="CHEBI:58349"/>
        <dbReference type="ChEBI" id="CHEBI:67139"/>
        <dbReference type="EC" id="1.17.1.8"/>
    </reaction>
</comment>
<comment type="pathway">
    <text evidence="1">Amino-acid biosynthesis; L-lysine biosynthesis via DAP pathway; (S)-tetrahydrodipicolinate from L-aspartate: step 4/4.</text>
</comment>
<comment type="subcellular location">
    <subcellularLocation>
        <location evidence="1">Cytoplasm</location>
    </subcellularLocation>
</comment>
<comment type="similarity">
    <text evidence="1">Belongs to the DapB family.</text>
</comment>
<comment type="caution">
    <text evidence="2">Was originally thought to be a dihydrodipicolinate reductase (DHDPR), catalyzing the conversion of dihydrodipicolinate to tetrahydrodipicolinate. However, it was shown in E.coli that the substrate of the enzymatic reaction is not dihydrodipicolinate (DHDP) but in fact (2S,4S)-4-hydroxy-2,3,4,5-tetrahydrodipicolinic acid (HTPA), the product released by the DapA-catalyzed reaction.</text>
</comment>
<sequence>MTPIKVVVHGASGKMGQEVLKTLCQENNFHPVGAVDIRAESPAMALPDGSGSIPYSADLSSILSQTKPDVMVDFTVAKASMPAIRIAAAHKVNLVIGTTGFSPEEISEIEQLAKTNDIGIILAPNFALGAIIMVHLAQVASRFLSSAEVIELHHDKKLDSPSGTALVTVASMLEARGEAFNKPPKENLTDARGQEHDGIRVHSVRLPGLLAHQEVIFGAAGQTLTIRHDAFSRECYMPGVLLAIKEIVHTKGFVFGLDKLLKL</sequence>
<protein>
    <recommendedName>
        <fullName evidence="1">4-hydroxy-tetrahydrodipicolinate reductase</fullName>
        <shortName evidence="1">HTPA reductase</shortName>
        <ecNumber evidence="1">1.17.1.8</ecNumber>
    </recommendedName>
</protein>
<organism>
    <name type="scientific">Dehalococcoides mccartyi (strain CBDB1)</name>
    <dbReference type="NCBI Taxonomy" id="255470"/>
    <lineage>
        <taxon>Bacteria</taxon>
        <taxon>Bacillati</taxon>
        <taxon>Chloroflexota</taxon>
        <taxon>Dehalococcoidia</taxon>
        <taxon>Dehalococcoidales</taxon>
        <taxon>Dehalococcoidaceae</taxon>
        <taxon>Dehalococcoides</taxon>
    </lineage>
</organism>
<dbReference type="EC" id="1.17.1.8" evidence="1"/>
<dbReference type="EMBL" id="AJ965256">
    <property type="protein sequence ID" value="CAI83061.1"/>
    <property type="molecule type" value="Genomic_DNA"/>
</dbReference>
<dbReference type="RefSeq" id="WP_011309412.1">
    <property type="nucleotide sequence ID" value="NC_007356.1"/>
</dbReference>
<dbReference type="SMR" id="Q3ZXV5"/>
<dbReference type="KEGG" id="deh:cbdbA933"/>
<dbReference type="HOGENOM" id="CLU_047479_0_1_0"/>
<dbReference type="UniPathway" id="UPA00034">
    <property type="reaction ID" value="UER00018"/>
</dbReference>
<dbReference type="Proteomes" id="UP000000433">
    <property type="component" value="Chromosome"/>
</dbReference>
<dbReference type="GO" id="GO:0005829">
    <property type="term" value="C:cytosol"/>
    <property type="evidence" value="ECO:0007669"/>
    <property type="project" value="TreeGrafter"/>
</dbReference>
<dbReference type="GO" id="GO:0008839">
    <property type="term" value="F:4-hydroxy-tetrahydrodipicolinate reductase"/>
    <property type="evidence" value="ECO:0007669"/>
    <property type="project" value="UniProtKB-EC"/>
</dbReference>
<dbReference type="GO" id="GO:0051287">
    <property type="term" value="F:NAD binding"/>
    <property type="evidence" value="ECO:0007669"/>
    <property type="project" value="UniProtKB-UniRule"/>
</dbReference>
<dbReference type="GO" id="GO:0050661">
    <property type="term" value="F:NADP binding"/>
    <property type="evidence" value="ECO:0007669"/>
    <property type="project" value="UniProtKB-UniRule"/>
</dbReference>
<dbReference type="GO" id="GO:0016726">
    <property type="term" value="F:oxidoreductase activity, acting on CH or CH2 groups, NAD or NADP as acceptor"/>
    <property type="evidence" value="ECO:0007669"/>
    <property type="project" value="UniProtKB-UniRule"/>
</dbReference>
<dbReference type="GO" id="GO:0019877">
    <property type="term" value="P:diaminopimelate biosynthetic process"/>
    <property type="evidence" value="ECO:0007669"/>
    <property type="project" value="UniProtKB-UniRule"/>
</dbReference>
<dbReference type="GO" id="GO:0009089">
    <property type="term" value="P:lysine biosynthetic process via diaminopimelate"/>
    <property type="evidence" value="ECO:0007669"/>
    <property type="project" value="UniProtKB-UniRule"/>
</dbReference>
<dbReference type="CDD" id="cd02274">
    <property type="entry name" value="DHDPR_N"/>
    <property type="match status" value="1"/>
</dbReference>
<dbReference type="FunFam" id="3.30.360.10:FF:000009">
    <property type="entry name" value="4-hydroxy-tetrahydrodipicolinate reductase"/>
    <property type="match status" value="1"/>
</dbReference>
<dbReference type="Gene3D" id="3.30.360.10">
    <property type="entry name" value="Dihydrodipicolinate Reductase, domain 2"/>
    <property type="match status" value="1"/>
</dbReference>
<dbReference type="Gene3D" id="3.40.50.720">
    <property type="entry name" value="NAD(P)-binding Rossmann-like Domain"/>
    <property type="match status" value="1"/>
</dbReference>
<dbReference type="HAMAP" id="MF_00102">
    <property type="entry name" value="DapB"/>
    <property type="match status" value="1"/>
</dbReference>
<dbReference type="InterPro" id="IPR022663">
    <property type="entry name" value="DapB_C"/>
</dbReference>
<dbReference type="InterPro" id="IPR000846">
    <property type="entry name" value="DapB_N"/>
</dbReference>
<dbReference type="InterPro" id="IPR022664">
    <property type="entry name" value="DapB_N_CS"/>
</dbReference>
<dbReference type="InterPro" id="IPR023940">
    <property type="entry name" value="DHDPR_bac"/>
</dbReference>
<dbReference type="InterPro" id="IPR036291">
    <property type="entry name" value="NAD(P)-bd_dom_sf"/>
</dbReference>
<dbReference type="NCBIfam" id="TIGR00036">
    <property type="entry name" value="dapB"/>
    <property type="match status" value="1"/>
</dbReference>
<dbReference type="PANTHER" id="PTHR20836:SF0">
    <property type="entry name" value="4-HYDROXY-TETRAHYDRODIPICOLINATE REDUCTASE 1, CHLOROPLASTIC-RELATED"/>
    <property type="match status" value="1"/>
</dbReference>
<dbReference type="PANTHER" id="PTHR20836">
    <property type="entry name" value="DIHYDRODIPICOLINATE REDUCTASE"/>
    <property type="match status" value="1"/>
</dbReference>
<dbReference type="Pfam" id="PF05173">
    <property type="entry name" value="DapB_C"/>
    <property type="match status" value="1"/>
</dbReference>
<dbReference type="Pfam" id="PF01113">
    <property type="entry name" value="DapB_N"/>
    <property type="match status" value="1"/>
</dbReference>
<dbReference type="PIRSF" id="PIRSF000161">
    <property type="entry name" value="DHPR"/>
    <property type="match status" value="1"/>
</dbReference>
<dbReference type="SUPFAM" id="SSF55347">
    <property type="entry name" value="Glyceraldehyde-3-phosphate dehydrogenase-like, C-terminal domain"/>
    <property type="match status" value="1"/>
</dbReference>
<dbReference type="SUPFAM" id="SSF51735">
    <property type="entry name" value="NAD(P)-binding Rossmann-fold domains"/>
    <property type="match status" value="1"/>
</dbReference>
<dbReference type="PROSITE" id="PS01298">
    <property type="entry name" value="DAPB"/>
    <property type="match status" value="1"/>
</dbReference>
<feature type="chain" id="PRO_0000228344" description="4-hydroxy-tetrahydrodipicolinate reductase">
    <location>
        <begin position="1"/>
        <end position="263"/>
    </location>
</feature>
<feature type="active site" description="Proton donor/acceptor" evidence="1">
    <location>
        <position position="153"/>
    </location>
</feature>
<feature type="active site" description="Proton donor" evidence="1">
    <location>
        <position position="157"/>
    </location>
</feature>
<feature type="binding site" evidence="1">
    <location>
        <begin position="10"/>
        <end position="15"/>
    </location>
    <ligand>
        <name>NAD(+)</name>
        <dbReference type="ChEBI" id="CHEBI:57540"/>
    </ligand>
</feature>
<feature type="binding site" evidence="1">
    <location>
        <position position="38"/>
    </location>
    <ligand>
        <name>NADP(+)</name>
        <dbReference type="ChEBI" id="CHEBI:58349"/>
    </ligand>
</feature>
<feature type="binding site" evidence="1">
    <location>
        <begin position="97"/>
        <end position="99"/>
    </location>
    <ligand>
        <name>NAD(+)</name>
        <dbReference type="ChEBI" id="CHEBI:57540"/>
    </ligand>
</feature>
<feature type="binding site" evidence="1">
    <location>
        <begin position="123"/>
        <end position="126"/>
    </location>
    <ligand>
        <name>NAD(+)</name>
        <dbReference type="ChEBI" id="CHEBI:57540"/>
    </ligand>
</feature>
<feature type="binding site" evidence="1">
    <location>
        <position position="154"/>
    </location>
    <ligand>
        <name>(S)-2,3,4,5-tetrahydrodipicolinate</name>
        <dbReference type="ChEBI" id="CHEBI:16845"/>
    </ligand>
</feature>
<feature type="binding site" evidence="1">
    <location>
        <begin position="163"/>
        <end position="164"/>
    </location>
    <ligand>
        <name>(S)-2,3,4,5-tetrahydrodipicolinate</name>
        <dbReference type="ChEBI" id="CHEBI:16845"/>
    </ligand>
</feature>
<proteinExistence type="inferred from homology"/>
<reference key="1">
    <citation type="journal article" date="2005" name="Nat. Biotechnol.">
        <title>Genome sequence of the chlorinated compound-respiring bacterium Dehalococcoides species strain CBDB1.</title>
        <authorList>
            <person name="Kube M."/>
            <person name="Beck A."/>
            <person name="Zinder S.H."/>
            <person name="Kuhl H."/>
            <person name="Reinhardt R."/>
            <person name="Adrian L."/>
        </authorList>
    </citation>
    <scope>NUCLEOTIDE SEQUENCE [LARGE SCALE GENOMIC DNA]</scope>
    <source>
        <strain>CBDB1</strain>
    </source>
</reference>
<keyword id="KW-0028">Amino-acid biosynthesis</keyword>
<keyword id="KW-0963">Cytoplasm</keyword>
<keyword id="KW-0220">Diaminopimelate biosynthesis</keyword>
<keyword id="KW-0457">Lysine biosynthesis</keyword>
<keyword id="KW-0520">NAD</keyword>
<keyword id="KW-0521">NADP</keyword>
<keyword id="KW-0560">Oxidoreductase</keyword>
<gene>
    <name evidence="1" type="primary">dapB</name>
    <name type="ordered locus">cbdbA933</name>
</gene>
<evidence type="ECO:0000255" key="1">
    <source>
        <dbReference type="HAMAP-Rule" id="MF_00102"/>
    </source>
</evidence>
<evidence type="ECO:0000305" key="2"/>